<proteinExistence type="inferred from homology"/>
<organism>
    <name type="scientific">Streptococcus pneumoniae (strain P1031)</name>
    <dbReference type="NCBI Taxonomy" id="488223"/>
    <lineage>
        <taxon>Bacteria</taxon>
        <taxon>Bacillati</taxon>
        <taxon>Bacillota</taxon>
        <taxon>Bacilli</taxon>
        <taxon>Lactobacillales</taxon>
        <taxon>Streptococcaceae</taxon>
        <taxon>Streptococcus</taxon>
    </lineage>
</organism>
<keyword id="KW-0687">Ribonucleoprotein</keyword>
<keyword id="KW-0689">Ribosomal protein</keyword>
<keyword id="KW-0694">RNA-binding</keyword>
<keyword id="KW-0699">rRNA-binding</keyword>
<sequence length="166" mass="17479">MSEAIIAKKAELVDVVAEKMKAAASIVVVDARGLTVEQDTVLRRELRGSEVEYKVIKNSILRRAAEKAGLEDLASVFVGPSAVAFSNEDVIAPAKILNDFSKNAEALEIKGGAIEGAVASKEEILALATLPNREGLLSMLLSVLQAPVRNVALAVKAVAESKEDAA</sequence>
<protein>
    <recommendedName>
        <fullName evidence="1">Large ribosomal subunit protein uL10</fullName>
    </recommendedName>
    <alternativeName>
        <fullName evidence="2">50S ribosomal protein L10</fullName>
    </alternativeName>
</protein>
<feature type="chain" id="PRO_1000195569" description="Large ribosomal subunit protein uL10">
    <location>
        <begin position="1"/>
        <end position="166"/>
    </location>
</feature>
<evidence type="ECO:0000255" key="1">
    <source>
        <dbReference type="HAMAP-Rule" id="MF_00362"/>
    </source>
</evidence>
<evidence type="ECO:0000305" key="2"/>
<name>RL10_STRZP</name>
<comment type="function">
    <text evidence="1">Forms part of the ribosomal stalk, playing a central role in the interaction of the ribosome with GTP-bound translation factors.</text>
</comment>
<comment type="subunit">
    <text evidence="1">Part of the ribosomal stalk of the 50S ribosomal subunit. The N-terminus interacts with L11 and the large rRNA to form the base of the stalk. The C-terminus forms an elongated spine to which L12 dimers bind in a sequential fashion forming a multimeric L10(L12)X complex.</text>
</comment>
<comment type="similarity">
    <text evidence="1">Belongs to the universal ribosomal protein uL10 family.</text>
</comment>
<reference key="1">
    <citation type="journal article" date="2010" name="Genome Biol.">
        <title>Structure and dynamics of the pan-genome of Streptococcus pneumoniae and closely related species.</title>
        <authorList>
            <person name="Donati C."/>
            <person name="Hiller N.L."/>
            <person name="Tettelin H."/>
            <person name="Muzzi A."/>
            <person name="Croucher N.J."/>
            <person name="Angiuoli S.V."/>
            <person name="Oggioni M."/>
            <person name="Dunning Hotopp J.C."/>
            <person name="Hu F.Z."/>
            <person name="Riley D.R."/>
            <person name="Covacci A."/>
            <person name="Mitchell T.J."/>
            <person name="Bentley S.D."/>
            <person name="Kilian M."/>
            <person name="Ehrlich G.D."/>
            <person name="Rappuoli R."/>
            <person name="Moxon E.R."/>
            <person name="Masignani V."/>
        </authorList>
    </citation>
    <scope>NUCLEOTIDE SEQUENCE [LARGE SCALE GENOMIC DNA]</scope>
    <source>
        <strain>P1031</strain>
    </source>
</reference>
<accession>C1CL63</accession>
<gene>
    <name evidence="1" type="primary">rplJ</name>
    <name type="ordered locus">SPP_1374</name>
</gene>
<dbReference type="EMBL" id="CP000920">
    <property type="protein sequence ID" value="ACO21544.1"/>
    <property type="molecule type" value="Genomic_DNA"/>
</dbReference>
<dbReference type="RefSeq" id="WP_001287278.1">
    <property type="nucleotide sequence ID" value="NC_012467.1"/>
</dbReference>
<dbReference type="SMR" id="C1CL63"/>
<dbReference type="GeneID" id="45653385"/>
<dbReference type="KEGG" id="spp:SPP_1374"/>
<dbReference type="HOGENOM" id="CLU_092227_2_0_9"/>
<dbReference type="GO" id="GO:0015934">
    <property type="term" value="C:large ribosomal subunit"/>
    <property type="evidence" value="ECO:0007669"/>
    <property type="project" value="InterPro"/>
</dbReference>
<dbReference type="GO" id="GO:0070180">
    <property type="term" value="F:large ribosomal subunit rRNA binding"/>
    <property type="evidence" value="ECO:0007669"/>
    <property type="project" value="UniProtKB-UniRule"/>
</dbReference>
<dbReference type="GO" id="GO:0003735">
    <property type="term" value="F:structural constituent of ribosome"/>
    <property type="evidence" value="ECO:0007669"/>
    <property type="project" value="InterPro"/>
</dbReference>
<dbReference type="GO" id="GO:0006412">
    <property type="term" value="P:translation"/>
    <property type="evidence" value="ECO:0007669"/>
    <property type="project" value="UniProtKB-UniRule"/>
</dbReference>
<dbReference type="CDD" id="cd05797">
    <property type="entry name" value="Ribosomal_L10"/>
    <property type="match status" value="1"/>
</dbReference>
<dbReference type="FunFam" id="3.30.70.1730:FF:000001">
    <property type="entry name" value="50S ribosomal protein L10"/>
    <property type="match status" value="1"/>
</dbReference>
<dbReference type="Gene3D" id="3.30.70.1730">
    <property type="match status" value="1"/>
</dbReference>
<dbReference type="HAMAP" id="MF_00362">
    <property type="entry name" value="Ribosomal_uL10"/>
    <property type="match status" value="1"/>
</dbReference>
<dbReference type="InterPro" id="IPR001790">
    <property type="entry name" value="Ribosomal_uL10"/>
</dbReference>
<dbReference type="InterPro" id="IPR043141">
    <property type="entry name" value="Ribosomal_uL10-like_sf"/>
</dbReference>
<dbReference type="InterPro" id="IPR022973">
    <property type="entry name" value="Ribosomal_uL10_bac"/>
</dbReference>
<dbReference type="InterPro" id="IPR047865">
    <property type="entry name" value="Ribosomal_uL10_bac_type"/>
</dbReference>
<dbReference type="InterPro" id="IPR002363">
    <property type="entry name" value="Ribosomal_uL10_CS_bac"/>
</dbReference>
<dbReference type="NCBIfam" id="NF000955">
    <property type="entry name" value="PRK00099.1-1"/>
    <property type="match status" value="1"/>
</dbReference>
<dbReference type="PANTHER" id="PTHR11560">
    <property type="entry name" value="39S RIBOSOMAL PROTEIN L10, MITOCHONDRIAL"/>
    <property type="match status" value="1"/>
</dbReference>
<dbReference type="Pfam" id="PF00466">
    <property type="entry name" value="Ribosomal_L10"/>
    <property type="match status" value="1"/>
</dbReference>
<dbReference type="SUPFAM" id="SSF160369">
    <property type="entry name" value="Ribosomal protein L10-like"/>
    <property type="match status" value="1"/>
</dbReference>
<dbReference type="PROSITE" id="PS01109">
    <property type="entry name" value="RIBOSOMAL_L10"/>
    <property type="match status" value="1"/>
</dbReference>